<feature type="chain" id="PRO_0000285384" description="Hsp70 nucleotide exchange factor fes1">
    <location>
        <begin position="1"/>
        <end position="216"/>
    </location>
</feature>
<feature type="repeat" description="ARM 1">
    <location>
        <begin position="27"/>
        <end position="68"/>
    </location>
</feature>
<feature type="repeat" description="ARM 2">
    <location>
        <begin position="87"/>
        <end position="126"/>
    </location>
</feature>
<feature type="repeat" description="ARM 3">
    <location>
        <begin position="129"/>
        <end position="169"/>
    </location>
</feature>
<feature type="repeat" description="ARM 4">
    <location>
        <begin position="185"/>
        <end position="216"/>
    </location>
</feature>
<feature type="region of interest" description="Disordered" evidence="2">
    <location>
        <begin position="19"/>
        <end position="38"/>
    </location>
</feature>
<evidence type="ECO:0000250" key="1"/>
<evidence type="ECO:0000256" key="2">
    <source>
        <dbReference type="SAM" id="MobiDB-lite"/>
    </source>
</evidence>
<evidence type="ECO:0000305" key="3"/>
<name>FES1_ASPFU</name>
<proteinExistence type="inferred from homology"/>
<sequence>MDPNMNNLLKWSIENSTSARQAGNSNGTGPAPASRSNLNPEMLSALFGGPSDADLMKAAMEALHSDEVDLENKMIAFDNFEQLIESIDNANNLEPLGLWTPLVELLKHEEAEMRRMAAWCIGTAVQNNEKAQDKLIVFNVLPTLVAMSTSDPAPAARKKAVYAISSGVRNYQPAMDEFVKHLPEGYTSGEKIDAADMEAIDALLDKLRAHPSEVSA</sequence>
<comment type="function">
    <text evidence="1">Functions as a nucleotide exchange factor (NEF) for Hsp70 chaperones which accelerates the release of ADP. Required for fully efficient Hsp70-mediated folding of proteins (By similarity).</text>
</comment>
<comment type="subcellular location">
    <subcellularLocation>
        <location evidence="1">Cytoplasm</location>
    </subcellularLocation>
</comment>
<comment type="similarity">
    <text evidence="3">Belongs to the FES1 family.</text>
</comment>
<gene>
    <name type="primary">fes1</name>
    <name type="ORF">AFUA_6G04750</name>
</gene>
<accession>Q4WDH3</accession>
<organism>
    <name type="scientific">Aspergillus fumigatus (strain ATCC MYA-4609 / CBS 101355 / FGSC A1100 / Af293)</name>
    <name type="common">Neosartorya fumigata</name>
    <dbReference type="NCBI Taxonomy" id="330879"/>
    <lineage>
        <taxon>Eukaryota</taxon>
        <taxon>Fungi</taxon>
        <taxon>Dikarya</taxon>
        <taxon>Ascomycota</taxon>
        <taxon>Pezizomycotina</taxon>
        <taxon>Eurotiomycetes</taxon>
        <taxon>Eurotiomycetidae</taxon>
        <taxon>Eurotiales</taxon>
        <taxon>Aspergillaceae</taxon>
        <taxon>Aspergillus</taxon>
        <taxon>Aspergillus subgen. Fumigati</taxon>
    </lineage>
</organism>
<keyword id="KW-0963">Cytoplasm</keyword>
<keyword id="KW-1185">Reference proteome</keyword>
<keyword id="KW-0677">Repeat</keyword>
<keyword id="KW-0810">Translation regulation</keyword>
<protein>
    <recommendedName>
        <fullName>Hsp70 nucleotide exchange factor fes1</fullName>
    </recommendedName>
</protein>
<dbReference type="EMBL" id="AAHF01000012">
    <property type="protein sequence ID" value="EAL85565.1"/>
    <property type="molecule type" value="Genomic_DNA"/>
</dbReference>
<dbReference type="RefSeq" id="XP_747603.1">
    <property type="nucleotide sequence ID" value="XM_742510.1"/>
</dbReference>
<dbReference type="SMR" id="Q4WDH3"/>
<dbReference type="FunCoup" id="Q4WDH3">
    <property type="interactions" value="205"/>
</dbReference>
<dbReference type="STRING" id="330879.Q4WDH3"/>
<dbReference type="EnsemblFungi" id="EAL85565">
    <property type="protein sequence ID" value="EAL85565"/>
    <property type="gene ID" value="AFUA_6G04750"/>
</dbReference>
<dbReference type="GeneID" id="3505187"/>
<dbReference type="KEGG" id="afm:AFUA_6G04750"/>
<dbReference type="VEuPathDB" id="FungiDB:Afu6g04750"/>
<dbReference type="eggNOG" id="KOG2160">
    <property type="taxonomic scope" value="Eukaryota"/>
</dbReference>
<dbReference type="HOGENOM" id="CLU_084507_0_0_1"/>
<dbReference type="InParanoid" id="Q4WDH3"/>
<dbReference type="OMA" id="LKWSVEN"/>
<dbReference type="OrthoDB" id="10250458at2759"/>
<dbReference type="Proteomes" id="UP000002530">
    <property type="component" value="Chromosome 6"/>
</dbReference>
<dbReference type="GO" id="GO:0005829">
    <property type="term" value="C:cytosol"/>
    <property type="evidence" value="ECO:0007669"/>
    <property type="project" value="EnsemblFungi"/>
</dbReference>
<dbReference type="GO" id="GO:0005783">
    <property type="term" value="C:endoplasmic reticulum"/>
    <property type="evidence" value="ECO:0000318"/>
    <property type="project" value="GO_Central"/>
</dbReference>
<dbReference type="GO" id="GO:0000774">
    <property type="term" value="F:adenyl-nucleotide exchange factor activity"/>
    <property type="evidence" value="ECO:0000318"/>
    <property type="project" value="GO_Central"/>
</dbReference>
<dbReference type="GO" id="GO:0071629">
    <property type="term" value="P:cytoplasm protein quality control by the ubiquitin-proteasome system"/>
    <property type="evidence" value="ECO:0007669"/>
    <property type="project" value="EnsemblFungi"/>
</dbReference>
<dbReference type="GO" id="GO:0006417">
    <property type="term" value="P:regulation of translation"/>
    <property type="evidence" value="ECO:0007669"/>
    <property type="project" value="UniProtKB-KW"/>
</dbReference>
<dbReference type="FunFam" id="1.25.10.10:FF:000434">
    <property type="entry name" value="Hsp70 nucleotide exchange factor fes1"/>
    <property type="match status" value="1"/>
</dbReference>
<dbReference type="Gene3D" id="1.25.10.10">
    <property type="entry name" value="Leucine-rich Repeat Variant"/>
    <property type="match status" value="1"/>
</dbReference>
<dbReference type="InterPro" id="IPR011989">
    <property type="entry name" value="ARM-like"/>
</dbReference>
<dbReference type="InterPro" id="IPR016024">
    <property type="entry name" value="ARM-type_fold"/>
</dbReference>
<dbReference type="InterPro" id="IPR050693">
    <property type="entry name" value="Hsp70_NEF-Inhibitors"/>
</dbReference>
<dbReference type="InterPro" id="IPR013918">
    <property type="entry name" value="Nucleotide_exch_fac_Fes1"/>
</dbReference>
<dbReference type="PANTHER" id="PTHR19316:SF18">
    <property type="entry name" value="HSP70-BINDING PROTEIN 1"/>
    <property type="match status" value="1"/>
</dbReference>
<dbReference type="PANTHER" id="PTHR19316">
    <property type="entry name" value="PROTEIN FOLDING REGULATOR"/>
    <property type="match status" value="1"/>
</dbReference>
<dbReference type="Pfam" id="PF08609">
    <property type="entry name" value="Fes1"/>
    <property type="match status" value="1"/>
</dbReference>
<dbReference type="Pfam" id="PF13513">
    <property type="entry name" value="HEAT_EZ"/>
    <property type="match status" value="1"/>
</dbReference>
<dbReference type="SUPFAM" id="SSF48371">
    <property type="entry name" value="ARM repeat"/>
    <property type="match status" value="1"/>
</dbReference>
<reference key="1">
    <citation type="journal article" date="2005" name="Nature">
        <title>Genomic sequence of the pathogenic and allergenic filamentous fungus Aspergillus fumigatus.</title>
        <authorList>
            <person name="Nierman W.C."/>
            <person name="Pain A."/>
            <person name="Anderson M.J."/>
            <person name="Wortman J.R."/>
            <person name="Kim H.S."/>
            <person name="Arroyo J."/>
            <person name="Berriman M."/>
            <person name="Abe K."/>
            <person name="Archer D.B."/>
            <person name="Bermejo C."/>
            <person name="Bennett J.W."/>
            <person name="Bowyer P."/>
            <person name="Chen D."/>
            <person name="Collins M."/>
            <person name="Coulsen R."/>
            <person name="Davies R."/>
            <person name="Dyer P.S."/>
            <person name="Farman M.L."/>
            <person name="Fedorova N."/>
            <person name="Fedorova N.D."/>
            <person name="Feldblyum T.V."/>
            <person name="Fischer R."/>
            <person name="Fosker N."/>
            <person name="Fraser A."/>
            <person name="Garcia J.L."/>
            <person name="Garcia M.J."/>
            <person name="Goble A."/>
            <person name="Goldman G.H."/>
            <person name="Gomi K."/>
            <person name="Griffith-Jones S."/>
            <person name="Gwilliam R."/>
            <person name="Haas B.J."/>
            <person name="Haas H."/>
            <person name="Harris D.E."/>
            <person name="Horiuchi H."/>
            <person name="Huang J."/>
            <person name="Humphray S."/>
            <person name="Jimenez J."/>
            <person name="Keller N."/>
            <person name="Khouri H."/>
            <person name="Kitamoto K."/>
            <person name="Kobayashi T."/>
            <person name="Konzack S."/>
            <person name="Kulkarni R."/>
            <person name="Kumagai T."/>
            <person name="Lafton A."/>
            <person name="Latge J.-P."/>
            <person name="Li W."/>
            <person name="Lord A."/>
            <person name="Lu C."/>
            <person name="Majoros W.H."/>
            <person name="May G.S."/>
            <person name="Miller B.L."/>
            <person name="Mohamoud Y."/>
            <person name="Molina M."/>
            <person name="Monod M."/>
            <person name="Mouyna I."/>
            <person name="Mulligan S."/>
            <person name="Murphy L.D."/>
            <person name="O'Neil S."/>
            <person name="Paulsen I."/>
            <person name="Penalva M.A."/>
            <person name="Pertea M."/>
            <person name="Price C."/>
            <person name="Pritchard B.L."/>
            <person name="Quail M.A."/>
            <person name="Rabbinowitsch E."/>
            <person name="Rawlins N."/>
            <person name="Rajandream M.A."/>
            <person name="Reichard U."/>
            <person name="Renauld H."/>
            <person name="Robson G.D."/>
            <person name="Rodriguez de Cordoba S."/>
            <person name="Rodriguez-Pena J.M."/>
            <person name="Ronning C.M."/>
            <person name="Rutter S."/>
            <person name="Salzberg S.L."/>
            <person name="Sanchez M."/>
            <person name="Sanchez-Ferrero J.C."/>
            <person name="Saunders D."/>
            <person name="Seeger K."/>
            <person name="Squares R."/>
            <person name="Squares S."/>
            <person name="Takeuchi M."/>
            <person name="Tekaia F."/>
            <person name="Turner G."/>
            <person name="Vazquez de Aldana C.R."/>
            <person name="Weidman J."/>
            <person name="White O."/>
            <person name="Woodward J.R."/>
            <person name="Yu J.-H."/>
            <person name="Fraser C.M."/>
            <person name="Galagan J.E."/>
            <person name="Asai K."/>
            <person name="Machida M."/>
            <person name="Hall N."/>
            <person name="Barrell B.G."/>
            <person name="Denning D.W."/>
        </authorList>
    </citation>
    <scope>NUCLEOTIDE SEQUENCE [LARGE SCALE GENOMIC DNA]</scope>
    <source>
        <strain>ATCC MYA-4609 / CBS 101355 / FGSC A1100 / Af293</strain>
    </source>
</reference>